<gene>
    <name evidence="1" type="primary">sstT</name>
    <name type="ordered locus">PP_2443</name>
</gene>
<proteinExistence type="inferred from homology"/>
<dbReference type="EMBL" id="AE015451">
    <property type="protein sequence ID" value="AAN68055.1"/>
    <property type="molecule type" value="Genomic_DNA"/>
</dbReference>
<dbReference type="RefSeq" id="NP_744591.1">
    <property type="nucleotide sequence ID" value="NC_002947.4"/>
</dbReference>
<dbReference type="RefSeq" id="WP_010953393.1">
    <property type="nucleotide sequence ID" value="NZ_CP169744.1"/>
</dbReference>
<dbReference type="SMR" id="Q88K49"/>
<dbReference type="STRING" id="160488.PP_2443"/>
<dbReference type="PaxDb" id="160488-PP_2443"/>
<dbReference type="GeneID" id="83681039"/>
<dbReference type="KEGG" id="ppu:PP_2443"/>
<dbReference type="PATRIC" id="fig|160488.4.peg.2588"/>
<dbReference type="eggNOG" id="COG3633">
    <property type="taxonomic scope" value="Bacteria"/>
</dbReference>
<dbReference type="HOGENOM" id="CLU_044581_0_0_6"/>
<dbReference type="OrthoDB" id="9768885at2"/>
<dbReference type="PhylomeDB" id="Q88K49"/>
<dbReference type="BioCyc" id="PPUT160488:G1G01-2610-MONOMER"/>
<dbReference type="Proteomes" id="UP000000556">
    <property type="component" value="Chromosome"/>
</dbReference>
<dbReference type="GO" id="GO:0005886">
    <property type="term" value="C:plasma membrane"/>
    <property type="evidence" value="ECO:0007669"/>
    <property type="project" value="UniProtKB-SubCell"/>
</dbReference>
<dbReference type="GO" id="GO:0005295">
    <property type="term" value="F:neutral L-amino acid:sodium symporter activity"/>
    <property type="evidence" value="ECO:0007669"/>
    <property type="project" value="TreeGrafter"/>
</dbReference>
<dbReference type="GO" id="GO:0032329">
    <property type="term" value="P:serine transport"/>
    <property type="evidence" value="ECO:0007669"/>
    <property type="project" value="InterPro"/>
</dbReference>
<dbReference type="GO" id="GO:0015826">
    <property type="term" value="P:threonine transport"/>
    <property type="evidence" value="ECO:0007669"/>
    <property type="project" value="InterPro"/>
</dbReference>
<dbReference type="FunFam" id="1.10.3860.10:FF:000003">
    <property type="entry name" value="Serine/threonine transporter sstT"/>
    <property type="match status" value="1"/>
</dbReference>
<dbReference type="Gene3D" id="1.10.3860.10">
    <property type="entry name" value="Sodium:dicarboxylate symporter"/>
    <property type="match status" value="1"/>
</dbReference>
<dbReference type="HAMAP" id="MF_01582">
    <property type="entry name" value="Ser_Thr_transp_SstT"/>
    <property type="match status" value="1"/>
</dbReference>
<dbReference type="InterPro" id="IPR001991">
    <property type="entry name" value="Na-dicarboxylate_symporter"/>
</dbReference>
<dbReference type="InterPro" id="IPR036458">
    <property type="entry name" value="Na:dicarbo_symporter_sf"/>
</dbReference>
<dbReference type="InterPro" id="IPR023025">
    <property type="entry name" value="Ser_Thr_transp_SstT"/>
</dbReference>
<dbReference type="NCBIfam" id="NF010151">
    <property type="entry name" value="PRK13628.1"/>
    <property type="match status" value="1"/>
</dbReference>
<dbReference type="PANTHER" id="PTHR42865">
    <property type="entry name" value="PROTON/GLUTAMATE-ASPARTATE SYMPORTER"/>
    <property type="match status" value="1"/>
</dbReference>
<dbReference type="PANTHER" id="PTHR42865:SF8">
    <property type="entry name" value="SERINE_THREONINE TRANSPORTER SSTT"/>
    <property type="match status" value="1"/>
</dbReference>
<dbReference type="Pfam" id="PF00375">
    <property type="entry name" value="SDF"/>
    <property type="match status" value="1"/>
</dbReference>
<dbReference type="PRINTS" id="PR00173">
    <property type="entry name" value="EDTRNSPORT"/>
</dbReference>
<dbReference type="SUPFAM" id="SSF118215">
    <property type="entry name" value="Proton glutamate symport protein"/>
    <property type="match status" value="1"/>
</dbReference>
<feature type="chain" id="PRO_0000309111" description="Serine/threonine transporter SstT">
    <location>
        <begin position="1"/>
        <end position="403"/>
    </location>
</feature>
<feature type="transmembrane region" description="Helical" evidence="1">
    <location>
        <begin position="14"/>
        <end position="34"/>
    </location>
</feature>
<feature type="transmembrane region" description="Helical" evidence="1">
    <location>
        <begin position="44"/>
        <end position="64"/>
    </location>
</feature>
<feature type="transmembrane region" description="Helical" evidence="1">
    <location>
        <begin position="79"/>
        <end position="99"/>
    </location>
</feature>
<feature type="transmembrane region" description="Helical" evidence="1">
    <location>
        <begin position="138"/>
        <end position="158"/>
    </location>
</feature>
<feature type="transmembrane region" description="Helical" evidence="1">
    <location>
        <begin position="175"/>
        <end position="195"/>
    </location>
</feature>
<feature type="transmembrane region" description="Helical" evidence="1">
    <location>
        <begin position="214"/>
        <end position="234"/>
    </location>
</feature>
<feature type="transmembrane region" description="Helical" evidence="1">
    <location>
        <begin position="295"/>
        <end position="315"/>
    </location>
</feature>
<feature type="transmembrane region" description="Helical" evidence="1">
    <location>
        <begin position="327"/>
        <end position="347"/>
    </location>
</feature>
<feature type="transmembrane region" description="Helical" evidence="1">
    <location>
        <begin position="353"/>
        <end position="373"/>
    </location>
</feature>
<comment type="function">
    <text evidence="1">Involved in the import of serine and threonine into the cell, with the concomitant import of sodium (symport system).</text>
</comment>
<comment type="catalytic activity">
    <reaction evidence="1">
        <text>L-serine(in) + Na(+)(in) = L-serine(out) + Na(+)(out)</text>
        <dbReference type="Rhea" id="RHEA:29575"/>
        <dbReference type="ChEBI" id="CHEBI:29101"/>
        <dbReference type="ChEBI" id="CHEBI:33384"/>
    </reaction>
    <physiologicalReaction direction="right-to-left" evidence="1">
        <dbReference type="Rhea" id="RHEA:29577"/>
    </physiologicalReaction>
</comment>
<comment type="catalytic activity">
    <reaction evidence="1">
        <text>L-threonine(in) + Na(+)(in) = L-threonine(out) + Na(+)(out)</text>
        <dbReference type="Rhea" id="RHEA:69999"/>
        <dbReference type="ChEBI" id="CHEBI:29101"/>
        <dbReference type="ChEBI" id="CHEBI:57926"/>
    </reaction>
    <physiologicalReaction direction="right-to-left" evidence="1">
        <dbReference type="Rhea" id="RHEA:70001"/>
    </physiologicalReaction>
</comment>
<comment type="subcellular location">
    <subcellularLocation>
        <location evidence="1">Cell inner membrane</location>
        <topology evidence="1">Multi-pass membrane protein</topology>
    </subcellularLocation>
</comment>
<comment type="similarity">
    <text evidence="1">Belongs to the dicarboxylate/amino acid:cation symporter (DAACS) (TC 2.A.23) family.</text>
</comment>
<organism>
    <name type="scientific">Pseudomonas putida (strain ATCC 47054 / DSM 6125 / CFBP 8728 / NCIMB 11950 / KT2440)</name>
    <dbReference type="NCBI Taxonomy" id="160488"/>
    <lineage>
        <taxon>Bacteria</taxon>
        <taxon>Pseudomonadati</taxon>
        <taxon>Pseudomonadota</taxon>
        <taxon>Gammaproteobacteria</taxon>
        <taxon>Pseudomonadales</taxon>
        <taxon>Pseudomonadaceae</taxon>
        <taxon>Pseudomonas</taxon>
    </lineage>
</organism>
<accession>Q88K49</accession>
<reference key="1">
    <citation type="journal article" date="2002" name="Environ. Microbiol.">
        <title>Complete genome sequence and comparative analysis of the metabolically versatile Pseudomonas putida KT2440.</title>
        <authorList>
            <person name="Nelson K.E."/>
            <person name="Weinel C."/>
            <person name="Paulsen I.T."/>
            <person name="Dodson R.J."/>
            <person name="Hilbert H."/>
            <person name="Martins dos Santos V.A.P."/>
            <person name="Fouts D.E."/>
            <person name="Gill S.R."/>
            <person name="Pop M."/>
            <person name="Holmes M."/>
            <person name="Brinkac L.M."/>
            <person name="Beanan M.J."/>
            <person name="DeBoy R.T."/>
            <person name="Daugherty S.C."/>
            <person name="Kolonay J.F."/>
            <person name="Madupu R."/>
            <person name="Nelson W.C."/>
            <person name="White O."/>
            <person name="Peterson J.D."/>
            <person name="Khouri H.M."/>
            <person name="Hance I."/>
            <person name="Chris Lee P."/>
            <person name="Holtzapple E.K."/>
            <person name="Scanlan D."/>
            <person name="Tran K."/>
            <person name="Moazzez A."/>
            <person name="Utterback T.R."/>
            <person name="Rizzo M."/>
            <person name="Lee K."/>
            <person name="Kosack D."/>
            <person name="Moestl D."/>
            <person name="Wedler H."/>
            <person name="Lauber J."/>
            <person name="Stjepandic D."/>
            <person name="Hoheisel J."/>
            <person name="Straetz M."/>
            <person name="Heim S."/>
            <person name="Kiewitz C."/>
            <person name="Eisen J.A."/>
            <person name="Timmis K.N."/>
            <person name="Duesterhoeft A."/>
            <person name="Tuemmler B."/>
            <person name="Fraser C.M."/>
        </authorList>
    </citation>
    <scope>NUCLEOTIDE SEQUENCE [LARGE SCALE GENOMIC DNA]</scope>
    <source>
        <strain>ATCC 47054 / DSM 6125 / CFBP 8728 / NCIMB 11950 / KT2440</strain>
    </source>
</reference>
<keyword id="KW-0029">Amino-acid transport</keyword>
<keyword id="KW-0997">Cell inner membrane</keyword>
<keyword id="KW-1003">Cell membrane</keyword>
<keyword id="KW-0472">Membrane</keyword>
<keyword id="KW-1185">Reference proteome</keyword>
<keyword id="KW-0769">Symport</keyword>
<keyword id="KW-0812">Transmembrane</keyword>
<keyword id="KW-1133">Transmembrane helix</keyword>
<keyword id="KW-0813">Transport</keyword>
<sequence length="403" mass="42013">MTPFLRILNRTSLVTQIVIGLLAGIALALLAPAIARDLAFLGKVFVSALKAVAPVLVFILVMASVANHRHGQETHIRPILWLYLLGTFAAAVVAVFASMLFPSHLALSTSEATLSAPGGIAEVLQNLLLNAVDNPVNALLNANFIGVLTWAIGLGVALRHAGETTRTVVEDLSNGVTLIVRVVIRFAPLGIFGLVSSTLAQSGLDALLGYLHLLAVLIGCMLFVALVMNPLIVFWKIRRNPYPLTLLCLRESGITAFFTRSSAANIPVNLALSERLGLHEDTYSVSIPLGATINMAGAAITITVLTLAAVHTLGIQVDLPTAVLLSVVAAVCACGASGVAGGSLLLIPLACSLFGIPSEIAMQVVAVGFIIGVLQDSAETALNSSTDVLFTAAACQAQEQRHG</sequence>
<protein>
    <recommendedName>
        <fullName evidence="1">Serine/threonine transporter SstT</fullName>
    </recommendedName>
    <alternativeName>
        <fullName evidence="1">Na(+)/serine-threonine symporter</fullName>
    </alternativeName>
</protein>
<name>SSTT_PSEPK</name>
<evidence type="ECO:0000255" key="1">
    <source>
        <dbReference type="HAMAP-Rule" id="MF_01582"/>
    </source>
</evidence>